<reference key="1">
    <citation type="journal article" date="1995" name="Gene">
        <title>Identification of five Rhodobacter capsulatus genes encoding the equivalent of ND subunits of the mitochondrial NADH-ubiquinone oxidoreductase.</title>
        <authorList>
            <person name="Dupuis A."/>
            <person name="Peinnequin A."/>
            <person name="Chevallet M."/>
            <person name="Lunardi J."/>
            <person name="Darrouzet E."/>
            <person name="Pierrard B."/>
            <person name="Procaccio V."/>
            <person name="Issartel J.P."/>
        </authorList>
    </citation>
    <scope>NUCLEOTIDE SEQUENCE [GENOMIC DNA]</scope>
    <source>
        <strain>ATCC 33303 / B10</strain>
    </source>
</reference>
<feature type="chain" id="PRO_0000118045" description="NADH-quinone oxidoreductase subunit M">
    <location>
        <begin position="1"/>
        <end position="512"/>
    </location>
</feature>
<feature type="transmembrane region" description="Helical" evidence="1">
    <location>
        <begin position="3"/>
        <end position="23"/>
    </location>
</feature>
<feature type="transmembrane region" description="Helical" evidence="1">
    <location>
        <begin position="36"/>
        <end position="56"/>
    </location>
</feature>
<feature type="transmembrane region" description="Helical" evidence="1">
    <location>
        <begin position="84"/>
        <end position="104"/>
    </location>
</feature>
<feature type="transmembrane region" description="Helical" evidence="1">
    <location>
        <begin position="112"/>
        <end position="132"/>
    </location>
</feature>
<feature type="transmembrane region" description="Helical" evidence="1">
    <location>
        <begin position="133"/>
        <end position="153"/>
    </location>
</feature>
<feature type="transmembrane region" description="Helical" evidence="1">
    <location>
        <begin position="166"/>
        <end position="186"/>
    </location>
</feature>
<feature type="transmembrane region" description="Helical" evidence="1">
    <location>
        <begin position="208"/>
        <end position="228"/>
    </location>
</feature>
<feature type="transmembrane region" description="Helical" evidence="1">
    <location>
        <begin position="251"/>
        <end position="271"/>
    </location>
</feature>
<feature type="transmembrane region" description="Helical" evidence="1">
    <location>
        <begin position="285"/>
        <end position="305"/>
    </location>
</feature>
<feature type="transmembrane region" description="Helical" evidence="1">
    <location>
        <begin position="313"/>
        <end position="333"/>
    </location>
</feature>
<feature type="transmembrane region" description="Helical" evidence="1">
    <location>
        <begin position="341"/>
        <end position="361"/>
    </location>
</feature>
<feature type="transmembrane region" description="Helical" evidence="1">
    <location>
        <begin position="384"/>
        <end position="404"/>
    </location>
</feature>
<feature type="transmembrane region" description="Helical" evidence="1">
    <location>
        <begin position="419"/>
        <end position="439"/>
    </location>
</feature>
<feature type="transmembrane region" description="Helical" evidence="1">
    <location>
        <begin position="464"/>
        <end position="484"/>
    </location>
</feature>
<accession>P50974</accession>
<dbReference type="EC" id="7.1.1.-"/>
<dbReference type="EMBL" id="AF029365">
    <property type="protein sequence ID" value="AAC25004.1"/>
    <property type="molecule type" value="Genomic_DNA"/>
</dbReference>
<dbReference type="RefSeq" id="WP_013067260.1">
    <property type="nucleotide sequence ID" value="NZ_VIBE01000008.1"/>
</dbReference>
<dbReference type="SMR" id="P50974"/>
<dbReference type="OMA" id="ITRWGNQ"/>
<dbReference type="GO" id="GO:0005886">
    <property type="term" value="C:plasma membrane"/>
    <property type="evidence" value="ECO:0007669"/>
    <property type="project" value="UniProtKB-SubCell"/>
</dbReference>
<dbReference type="GO" id="GO:0008137">
    <property type="term" value="F:NADH dehydrogenase (ubiquinone) activity"/>
    <property type="evidence" value="ECO:0007669"/>
    <property type="project" value="InterPro"/>
</dbReference>
<dbReference type="GO" id="GO:0048039">
    <property type="term" value="F:ubiquinone binding"/>
    <property type="evidence" value="ECO:0007669"/>
    <property type="project" value="TreeGrafter"/>
</dbReference>
<dbReference type="GO" id="GO:0042773">
    <property type="term" value="P:ATP synthesis coupled electron transport"/>
    <property type="evidence" value="ECO:0007669"/>
    <property type="project" value="InterPro"/>
</dbReference>
<dbReference type="GO" id="GO:0015990">
    <property type="term" value="P:electron transport coupled proton transport"/>
    <property type="evidence" value="ECO:0007669"/>
    <property type="project" value="TreeGrafter"/>
</dbReference>
<dbReference type="InterPro" id="IPR010227">
    <property type="entry name" value="NADH_Q_OxRdtase_chainM/4"/>
</dbReference>
<dbReference type="InterPro" id="IPR003918">
    <property type="entry name" value="NADH_UbQ_OxRdtase"/>
</dbReference>
<dbReference type="InterPro" id="IPR001750">
    <property type="entry name" value="ND/Mrp_TM"/>
</dbReference>
<dbReference type="NCBIfam" id="TIGR01972">
    <property type="entry name" value="NDH_I_M"/>
    <property type="match status" value="1"/>
</dbReference>
<dbReference type="NCBIfam" id="NF004499">
    <property type="entry name" value="PRK05846.1-3"/>
    <property type="match status" value="1"/>
</dbReference>
<dbReference type="NCBIfam" id="NF004501">
    <property type="entry name" value="PRK05846.1-5"/>
    <property type="match status" value="1"/>
</dbReference>
<dbReference type="PANTHER" id="PTHR43507">
    <property type="entry name" value="NADH-UBIQUINONE OXIDOREDUCTASE CHAIN 4"/>
    <property type="match status" value="1"/>
</dbReference>
<dbReference type="PANTHER" id="PTHR43507:SF1">
    <property type="entry name" value="NADH-UBIQUINONE OXIDOREDUCTASE CHAIN 4"/>
    <property type="match status" value="1"/>
</dbReference>
<dbReference type="Pfam" id="PF00361">
    <property type="entry name" value="Proton_antipo_M"/>
    <property type="match status" value="1"/>
</dbReference>
<dbReference type="PRINTS" id="PR01437">
    <property type="entry name" value="NUOXDRDTASE4"/>
</dbReference>
<gene>
    <name type="primary">nuoM</name>
</gene>
<name>NUOM_RHOCA</name>
<protein>
    <recommendedName>
        <fullName>NADH-quinone oxidoreductase subunit M</fullName>
        <ecNumber>7.1.1.-</ecNumber>
    </recommendedName>
    <alternativeName>
        <fullName>NADH dehydrogenase I subunit M</fullName>
    </alternativeName>
    <alternativeName>
        <fullName>NDH-1 subunit M</fullName>
    </alternativeName>
</protein>
<keyword id="KW-1003">Cell membrane</keyword>
<keyword id="KW-0472">Membrane</keyword>
<keyword id="KW-0520">NAD</keyword>
<keyword id="KW-0874">Quinone</keyword>
<keyword id="KW-1278">Translocase</keyword>
<keyword id="KW-0812">Transmembrane</keyword>
<keyword id="KW-1133">Transmembrane helix</keyword>
<keyword id="KW-0830">Ubiquinone</keyword>
<evidence type="ECO:0000255" key="1"/>
<evidence type="ECO:0000305" key="2"/>
<proteinExistence type="inferred from homology"/>
<organism>
    <name type="scientific">Rhodobacter capsulatus</name>
    <name type="common">Rhodopseudomonas capsulata</name>
    <dbReference type="NCBI Taxonomy" id="1061"/>
    <lineage>
        <taxon>Bacteria</taxon>
        <taxon>Pseudomonadati</taxon>
        <taxon>Pseudomonadota</taxon>
        <taxon>Alphaproteobacteria</taxon>
        <taxon>Rhodobacterales</taxon>
        <taxon>Rhodobacter group</taxon>
        <taxon>Rhodobacter</taxon>
    </lineage>
</organism>
<sequence>MQNLLSIITFLPLAAAAVLAVVSRGSGPAADRNAKWVALTATVVTFLVSLLLLAGFDPANPGMQFVEDRAWIMGLHYKLGVDGISILFVMLTTFLMPLTIASAWHVETRVKEYMIAFLVLEALMIGVFVALDLVLFYLFFEAGLIPMFLIIGIWGGKERIYAAFKFFLYTFLGSVLMLVAMVAMYMMAGTTDIVTLMSFDFPHADLPFLGWWTLTGGVQTLLFLAFFASFAVKMPMWPVHTWLPDAHVQAPTAGSVVLAAVLLKMGGYGFLRFSLPMFPVGAETMTTFVFILSAVAIVYTSLVALAQEDMKKLIAYSSVAHMGYVTMGIFAANQQGVDGAIFQMLSHGFISGALFLCVGVIYDRMHTREIAAYGGLVNRMPAYALIFMFFTMANVGLPGTSGFVGEFLTLLGIFQVNTWVALFATSGVILSAAYALWLYRRVVFGELVKESLKTISDMTTREKAIFAPLVAMTLLLGVYPSLVTDLIGPSVAHLVQNYHADLGTLAQATAGN</sequence>
<comment type="function">
    <text>NDH-1 shuttles electrons from NADH, via FMN and iron-sulfur (Fe-S) centers, to quinones in the respiratory chain. The immediate electron acceptor for the enzyme in this species is believed to be ubiquinone. Couples the redox reaction to proton translocation (for every two electrons transferred, four hydrogen ions are translocated across the cytoplasmic membrane), and thus conserves the redox energy in a proton gradient.</text>
</comment>
<comment type="catalytic activity">
    <reaction>
        <text>a quinone + NADH + 5 H(+)(in) = a quinol + NAD(+) + 4 H(+)(out)</text>
        <dbReference type="Rhea" id="RHEA:57888"/>
        <dbReference type="ChEBI" id="CHEBI:15378"/>
        <dbReference type="ChEBI" id="CHEBI:24646"/>
        <dbReference type="ChEBI" id="CHEBI:57540"/>
        <dbReference type="ChEBI" id="CHEBI:57945"/>
        <dbReference type="ChEBI" id="CHEBI:132124"/>
    </reaction>
</comment>
<comment type="subcellular location">
    <subcellularLocation>
        <location evidence="2">Cell membrane</location>
        <topology evidence="2">Multi-pass membrane protein</topology>
    </subcellularLocation>
</comment>
<comment type="similarity">
    <text evidence="2">Belongs to the complex I subunit 4 family.</text>
</comment>